<organism>
    <name type="scientific">Nocardia farcinica (strain IFM 10152)</name>
    <dbReference type="NCBI Taxonomy" id="247156"/>
    <lineage>
        <taxon>Bacteria</taxon>
        <taxon>Bacillati</taxon>
        <taxon>Actinomycetota</taxon>
        <taxon>Actinomycetes</taxon>
        <taxon>Mycobacteriales</taxon>
        <taxon>Nocardiaceae</taxon>
        <taxon>Nocardia</taxon>
    </lineage>
</organism>
<comment type="function">
    <text evidence="1">One of the primary rRNA binding proteins, it binds directly to 16S rRNA where it nucleates assembly of the body of the 30S subunit.</text>
</comment>
<comment type="function">
    <text evidence="1">With S5 and S12 plays an important role in translational accuracy.</text>
</comment>
<comment type="subunit">
    <text evidence="1">Part of the 30S ribosomal subunit. Contacts protein S5. The interaction surface between S4 and S5 is involved in control of translational fidelity.</text>
</comment>
<comment type="similarity">
    <text evidence="1">Belongs to the universal ribosomal protein uS4 family.</text>
</comment>
<dbReference type="EMBL" id="AP006618">
    <property type="protein sequence ID" value="BAD55681.1"/>
    <property type="molecule type" value="Genomic_DNA"/>
</dbReference>
<dbReference type="RefSeq" id="WP_011207366.1">
    <property type="nucleotide sequence ID" value="NC_006361.1"/>
</dbReference>
<dbReference type="SMR" id="Q5Z1L0"/>
<dbReference type="STRING" id="247156.NFA_8360"/>
<dbReference type="GeneID" id="61131664"/>
<dbReference type="KEGG" id="nfa:NFA_8360"/>
<dbReference type="eggNOG" id="COG0522">
    <property type="taxonomic scope" value="Bacteria"/>
</dbReference>
<dbReference type="HOGENOM" id="CLU_092403_0_2_11"/>
<dbReference type="OrthoDB" id="9803672at2"/>
<dbReference type="Proteomes" id="UP000006820">
    <property type="component" value="Chromosome"/>
</dbReference>
<dbReference type="GO" id="GO:0015935">
    <property type="term" value="C:small ribosomal subunit"/>
    <property type="evidence" value="ECO:0007669"/>
    <property type="project" value="InterPro"/>
</dbReference>
<dbReference type="GO" id="GO:0019843">
    <property type="term" value="F:rRNA binding"/>
    <property type="evidence" value="ECO:0007669"/>
    <property type="project" value="UniProtKB-UniRule"/>
</dbReference>
<dbReference type="GO" id="GO:0003735">
    <property type="term" value="F:structural constituent of ribosome"/>
    <property type="evidence" value="ECO:0007669"/>
    <property type="project" value="InterPro"/>
</dbReference>
<dbReference type="GO" id="GO:0042274">
    <property type="term" value="P:ribosomal small subunit biogenesis"/>
    <property type="evidence" value="ECO:0007669"/>
    <property type="project" value="TreeGrafter"/>
</dbReference>
<dbReference type="GO" id="GO:0006412">
    <property type="term" value="P:translation"/>
    <property type="evidence" value="ECO:0007669"/>
    <property type="project" value="UniProtKB-UniRule"/>
</dbReference>
<dbReference type="CDD" id="cd00165">
    <property type="entry name" value="S4"/>
    <property type="match status" value="1"/>
</dbReference>
<dbReference type="FunFam" id="3.10.290.10:FF:000001">
    <property type="entry name" value="30S ribosomal protein S4"/>
    <property type="match status" value="1"/>
</dbReference>
<dbReference type="Gene3D" id="1.10.1050.10">
    <property type="entry name" value="Ribosomal Protein S4 Delta 41, Chain A, domain 1"/>
    <property type="match status" value="1"/>
</dbReference>
<dbReference type="Gene3D" id="3.10.290.10">
    <property type="entry name" value="RNA-binding S4 domain"/>
    <property type="match status" value="1"/>
</dbReference>
<dbReference type="HAMAP" id="MF_01306_B">
    <property type="entry name" value="Ribosomal_uS4_B"/>
    <property type="match status" value="1"/>
</dbReference>
<dbReference type="InterPro" id="IPR022801">
    <property type="entry name" value="Ribosomal_uS4"/>
</dbReference>
<dbReference type="InterPro" id="IPR005709">
    <property type="entry name" value="Ribosomal_uS4_bac-type"/>
</dbReference>
<dbReference type="InterPro" id="IPR018079">
    <property type="entry name" value="Ribosomal_uS4_CS"/>
</dbReference>
<dbReference type="InterPro" id="IPR001912">
    <property type="entry name" value="Ribosomal_uS4_N"/>
</dbReference>
<dbReference type="InterPro" id="IPR002942">
    <property type="entry name" value="S4_RNA-bd"/>
</dbReference>
<dbReference type="InterPro" id="IPR036986">
    <property type="entry name" value="S4_RNA-bd_sf"/>
</dbReference>
<dbReference type="NCBIfam" id="NF003717">
    <property type="entry name" value="PRK05327.1"/>
    <property type="match status" value="1"/>
</dbReference>
<dbReference type="NCBIfam" id="TIGR01017">
    <property type="entry name" value="rpsD_bact"/>
    <property type="match status" value="1"/>
</dbReference>
<dbReference type="PANTHER" id="PTHR11831">
    <property type="entry name" value="30S 40S RIBOSOMAL PROTEIN"/>
    <property type="match status" value="1"/>
</dbReference>
<dbReference type="PANTHER" id="PTHR11831:SF4">
    <property type="entry name" value="SMALL RIBOSOMAL SUBUNIT PROTEIN US4M"/>
    <property type="match status" value="1"/>
</dbReference>
<dbReference type="Pfam" id="PF00163">
    <property type="entry name" value="Ribosomal_S4"/>
    <property type="match status" value="1"/>
</dbReference>
<dbReference type="Pfam" id="PF01479">
    <property type="entry name" value="S4"/>
    <property type="match status" value="1"/>
</dbReference>
<dbReference type="SMART" id="SM01390">
    <property type="entry name" value="Ribosomal_S4"/>
    <property type="match status" value="1"/>
</dbReference>
<dbReference type="SMART" id="SM00363">
    <property type="entry name" value="S4"/>
    <property type="match status" value="1"/>
</dbReference>
<dbReference type="SUPFAM" id="SSF55174">
    <property type="entry name" value="Alpha-L RNA-binding motif"/>
    <property type="match status" value="1"/>
</dbReference>
<dbReference type="PROSITE" id="PS00632">
    <property type="entry name" value="RIBOSOMAL_S4"/>
    <property type="match status" value="1"/>
</dbReference>
<dbReference type="PROSITE" id="PS50889">
    <property type="entry name" value="S4"/>
    <property type="match status" value="1"/>
</dbReference>
<gene>
    <name evidence="1" type="primary">rpsD</name>
    <name type="ordered locus">NFA_8360</name>
</gene>
<reference key="1">
    <citation type="journal article" date="2004" name="Proc. Natl. Acad. Sci. U.S.A.">
        <title>The complete genomic sequence of Nocardia farcinica IFM 10152.</title>
        <authorList>
            <person name="Ishikawa J."/>
            <person name="Yamashita A."/>
            <person name="Mikami Y."/>
            <person name="Hoshino Y."/>
            <person name="Kurita H."/>
            <person name="Hotta K."/>
            <person name="Shiba T."/>
            <person name="Hattori M."/>
        </authorList>
    </citation>
    <scope>NUCLEOTIDE SEQUENCE [LARGE SCALE GENOMIC DNA]</scope>
    <source>
        <strain>IFM 10152</strain>
    </source>
</reference>
<sequence>MARYTGPITRKSRRLRVDLVGGDQAFERRPYPPGQHGRARIKESEYLLQLQEKQKARFSYGVMEKQFRRYYEEANRQKGKTGDNLLRLLETRLDNVVYRAGLARTRRQARQLVSHGHFLVNGVKVDVPSYRVSQYDIIDVKEKSLSTLPFQVARETLGERPVPGWLQVLPGRLRILVHQEPERAQIDVPLQEQLIVEYYSK</sequence>
<evidence type="ECO:0000255" key="1">
    <source>
        <dbReference type="HAMAP-Rule" id="MF_01306"/>
    </source>
</evidence>
<evidence type="ECO:0000305" key="2"/>
<name>RS4_NOCFA</name>
<feature type="chain" id="PRO_0000132427" description="Small ribosomal subunit protein uS4">
    <location>
        <begin position="1"/>
        <end position="201"/>
    </location>
</feature>
<feature type="domain" description="S4 RNA-binding" evidence="1">
    <location>
        <begin position="91"/>
        <end position="155"/>
    </location>
</feature>
<accession>Q5Z1L0</accession>
<keyword id="KW-1185">Reference proteome</keyword>
<keyword id="KW-0687">Ribonucleoprotein</keyword>
<keyword id="KW-0689">Ribosomal protein</keyword>
<keyword id="KW-0694">RNA-binding</keyword>
<keyword id="KW-0699">rRNA-binding</keyword>
<proteinExistence type="inferred from homology"/>
<protein>
    <recommendedName>
        <fullName evidence="1">Small ribosomal subunit protein uS4</fullName>
    </recommendedName>
    <alternativeName>
        <fullName evidence="2">30S ribosomal protein S4</fullName>
    </alternativeName>
</protein>